<sequence>MAERGSDIRPGQILDHNGSLYLVVKTMHTQPGKGGAYIQAELKNLKTGAKYQERFRSDGYVKRAIVEEVEYQYIFGDGASLTLMNTATYEQVSISADMLGEKGVYLKEGIILTLSFYQGQVVAARVPDYVVLEVVETESVIKGQTASSSYKSAVLENGERISVPPFIKVGERIVVYTVDDTYYERAKD</sequence>
<accession>Q5PB21</accession>
<comment type="function">
    <text evidence="1">Involved in peptide bond synthesis. Stimulates efficient translation and peptide-bond synthesis on native or reconstituted 70S ribosomes in vitro. Probably functions indirectly by altering the affinity of the ribosome for aminoacyl-tRNA, thus increasing their reactivity as acceptors for peptidyl transferase.</text>
</comment>
<comment type="pathway">
    <text evidence="1">Protein biosynthesis; polypeptide chain elongation.</text>
</comment>
<comment type="subcellular location">
    <subcellularLocation>
        <location evidence="1">Cytoplasm</location>
    </subcellularLocation>
</comment>
<comment type="similarity">
    <text evidence="1">Belongs to the elongation factor P family.</text>
</comment>
<evidence type="ECO:0000255" key="1">
    <source>
        <dbReference type="HAMAP-Rule" id="MF_00141"/>
    </source>
</evidence>
<name>EFP_ANAMM</name>
<feature type="chain" id="PRO_0000094187" description="Elongation factor P">
    <location>
        <begin position="1"/>
        <end position="188"/>
    </location>
</feature>
<protein>
    <recommendedName>
        <fullName evidence="1">Elongation factor P</fullName>
        <shortName evidence="1">EF-P</shortName>
    </recommendedName>
</protein>
<proteinExistence type="inferred from homology"/>
<organism>
    <name type="scientific">Anaplasma marginale (strain St. Maries)</name>
    <dbReference type="NCBI Taxonomy" id="234826"/>
    <lineage>
        <taxon>Bacteria</taxon>
        <taxon>Pseudomonadati</taxon>
        <taxon>Pseudomonadota</taxon>
        <taxon>Alphaproteobacteria</taxon>
        <taxon>Rickettsiales</taxon>
        <taxon>Anaplasmataceae</taxon>
        <taxon>Anaplasma</taxon>
    </lineage>
</organism>
<keyword id="KW-0963">Cytoplasm</keyword>
<keyword id="KW-0251">Elongation factor</keyword>
<keyword id="KW-0648">Protein biosynthesis</keyword>
<gene>
    <name evidence="1" type="primary">efp</name>
    <name type="ordered locus">AM472</name>
</gene>
<dbReference type="EMBL" id="CP000030">
    <property type="protein sequence ID" value="AAV86509.1"/>
    <property type="molecule type" value="Genomic_DNA"/>
</dbReference>
<dbReference type="RefSeq" id="WP_011114290.1">
    <property type="nucleotide sequence ID" value="NZ_AFMU01000028.1"/>
</dbReference>
<dbReference type="SMR" id="Q5PB21"/>
<dbReference type="KEGG" id="ama:AM472"/>
<dbReference type="HOGENOM" id="CLU_074944_1_1_5"/>
<dbReference type="UniPathway" id="UPA00345"/>
<dbReference type="GO" id="GO:0005737">
    <property type="term" value="C:cytoplasm"/>
    <property type="evidence" value="ECO:0007669"/>
    <property type="project" value="UniProtKB-SubCell"/>
</dbReference>
<dbReference type="GO" id="GO:0003746">
    <property type="term" value="F:translation elongation factor activity"/>
    <property type="evidence" value="ECO:0007669"/>
    <property type="project" value="UniProtKB-UniRule"/>
</dbReference>
<dbReference type="GO" id="GO:0043043">
    <property type="term" value="P:peptide biosynthetic process"/>
    <property type="evidence" value="ECO:0007669"/>
    <property type="project" value="InterPro"/>
</dbReference>
<dbReference type="CDD" id="cd05794">
    <property type="entry name" value="S1_EF-P_repeat_2"/>
    <property type="match status" value="1"/>
</dbReference>
<dbReference type="FunFam" id="2.40.50.140:FF:000004">
    <property type="entry name" value="Elongation factor P"/>
    <property type="match status" value="1"/>
</dbReference>
<dbReference type="Gene3D" id="2.30.30.30">
    <property type="match status" value="1"/>
</dbReference>
<dbReference type="Gene3D" id="2.40.50.140">
    <property type="entry name" value="Nucleic acid-binding proteins"/>
    <property type="match status" value="2"/>
</dbReference>
<dbReference type="HAMAP" id="MF_00141">
    <property type="entry name" value="EF_P"/>
    <property type="match status" value="1"/>
</dbReference>
<dbReference type="InterPro" id="IPR015365">
    <property type="entry name" value="Elong-fact-P_C"/>
</dbReference>
<dbReference type="InterPro" id="IPR012340">
    <property type="entry name" value="NA-bd_OB-fold"/>
</dbReference>
<dbReference type="InterPro" id="IPR014722">
    <property type="entry name" value="Rib_uL2_dom2"/>
</dbReference>
<dbReference type="InterPro" id="IPR020599">
    <property type="entry name" value="Transl_elong_fac_P/YeiP"/>
</dbReference>
<dbReference type="InterPro" id="IPR013185">
    <property type="entry name" value="Transl_elong_KOW-like"/>
</dbReference>
<dbReference type="InterPro" id="IPR001059">
    <property type="entry name" value="Transl_elong_P/YeiP_cen"/>
</dbReference>
<dbReference type="InterPro" id="IPR013852">
    <property type="entry name" value="Transl_elong_P/YeiP_CS"/>
</dbReference>
<dbReference type="InterPro" id="IPR011768">
    <property type="entry name" value="Transl_elongation_fac_P"/>
</dbReference>
<dbReference type="InterPro" id="IPR008991">
    <property type="entry name" value="Translation_prot_SH3-like_sf"/>
</dbReference>
<dbReference type="NCBIfam" id="TIGR00038">
    <property type="entry name" value="efp"/>
    <property type="match status" value="1"/>
</dbReference>
<dbReference type="NCBIfam" id="NF001810">
    <property type="entry name" value="PRK00529.1"/>
    <property type="match status" value="1"/>
</dbReference>
<dbReference type="PANTHER" id="PTHR30053">
    <property type="entry name" value="ELONGATION FACTOR P"/>
    <property type="match status" value="1"/>
</dbReference>
<dbReference type="PANTHER" id="PTHR30053:SF14">
    <property type="entry name" value="TRANSLATION ELONGATION FACTOR KOW-LIKE DOMAIN-CONTAINING PROTEIN"/>
    <property type="match status" value="1"/>
</dbReference>
<dbReference type="Pfam" id="PF01132">
    <property type="entry name" value="EFP"/>
    <property type="match status" value="1"/>
</dbReference>
<dbReference type="Pfam" id="PF08207">
    <property type="entry name" value="EFP_N"/>
    <property type="match status" value="1"/>
</dbReference>
<dbReference type="Pfam" id="PF09285">
    <property type="entry name" value="Elong-fact-P_C"/>
    <property type="match status" value="1"/>
</dbReference>
<dbReference type="PIRSF" id="PIRSF005901">
    <property type="entry name" value="EF-P"/>
    <property type="match status" value="1"/>
</dbReference>
<dbReference type="SMART" id="SM01185">
    <property type="entry name" value="EFP"/>
    <property type="match status" value="1"/>
</dbReference>
<dbReference type="SMART" id="SM00841">
    <property type="entry name" value="Elong-fact-P_C"/>
    <property type="match status" value="1"/>
</dbReference>
<dbReference type="SUPFAM" id="SSF50249">
    <property type="entry name" value="Nucleic acid-binding proteins"/>
    <property type="match status" value="2"/>
</dbReference>
<dbReference type="SUPFAM" id="SSF50104">
    <property type="entry name" value="Translation proteins SH3-like domain"/>
    <property type="match status" value="1"/>
</dbReference>
<dbReference type="PROSITE" id="PS01275">
    <property type="entry name" value="EFP"/>
    <property type="match status" value="1"/>
</dbReference>
<reference key="1">
    <citation type="journal article" date="2005" name="Proc. Natl. Acad. Sci. U.S.A.">
        <title>Complete genome sequencing of Anaplasma marginale reveals that the surface is skewed to two superfamilies of outer membrane proteins.</title>
        <authorList>
            <person name="Brayton K.A."/>
            <person name="Kappmeyer L.S."/>
            <person name="Herndon D.R."/>
            <person name="Dark M.J."/>
            <person name="Tibbals D.L."/>
            <person name="Palmer G.H."/>
            <person name="McGuire T.C."/>
            <person name="Knowles D.P. Jr."/>
        </authorList>
    </citation>
    <scope>NUCLEOTIDE SEQUENCE [LARGE SCALE GENOMIC DNA]</scope>
    <source>
        <strain>St. Maries</strain>
    </source>
</reference>